<name>HSAC_MYCTO</name>
<reference key="1">
    <citation type="journal article" date="2002" name="J. Bacteriol.">
        <title>Whole-genome comparison of Mycobacterium tuberculosis clinical and laboratory strains.</title>
        <authorList>
            <person name="Fleischmann R.D."/>
            <person name="Alland D."/>
            <person name="Eisen J.A."/>
            <person name="Carpenter L."/>
            <person name="White O."/>
            <person name="Peterson J.D."/>
            <person name="DeBoy R.T."/>
            <person name="Dodson R.J."/>
            <person name="Gwinn M.L."/>
            <person name="Haft D.H."/>
            <person name="Hickey E.K."/>
            <person name="Kolonay J.F."/>
            <person name="Nelson W.C."/>
            <person name="Umayam L.A."/>
            <person name="Ermolaeva M.D."/>
            <person name="Salzberg S.L."/>
            <person name="Delcher A."/>
            <person name="Utterback T.R."/>
            <person name="Weidman J.F."/>
            <person name="Khouri H.M."/>
            <person name="Gill J."/>
            <person name="Mikula A."/>
            <person name="Bishai W."/>
            <person name="Jacobs W.R. Jr."/>
            <person name="Venter J.C."/>
            <person name="Fraser C.M."/>
        </authorList>
    </citation>
    <scope>NUCLEOTIDE SEQUENCE [LARGE SCALE GENOMIC DNA]</scope>
    <source>
        <strain>CDC 1551 / Oshkosh</strain>
    </source>
</reference>
<organism>
    <name type="scientific">Mycobacterium tuberculosis (strain CDC 1551 / Oshkosh)</name>
    <dbReference type="NCBI Taxonomy" id="83331"/>
    <lineage>
        <taxon>Bacteria</taxon>
        <taxon>Bacillati</taxon>
        <taxon>Actinomycetota</taxon>
        <taxon>Actinomycetes</taxon>
        <taxon>Mycobacteriales</taxon>
        <taxon>Mycobacteriaceae</taxon>
        <taxon>Mycobacterium</taxon>
        <taxon>Mycobacterium tuberculosis complex</taxon>
    </lineage>
</organism>
<sequence>MSIRSLGYLRIEATDMAAWREYGLKVLGMVEGKGAPEGALYLRMDDFPARLVVVPGEHDRLLEAGWECANAEGLQEIRNRLDLEGTPYKEATAAELADRRVDEMIRFADPSGNCLEVFHGTALEHRRVVSPYGHRFVTGEQGMGHVVLSTRDDAEALHFYRDVLGFRLRDSMRLPPQMVGRPADGPPAWLRFFGCNPRHHSLAFLPMPTSSGIVHLMVEVEQADDVGLCLDRALRRKVPMSATLGRHVNDLMLSFYMKTPGGFDIEFGCEGRQVDDRDWIARESTAVSLWGHDFTVGARG</sequence>
<feature type="chain" id="PRO_0000427055" description="Iron-dependent extradiol dioxygenase">
    <location>
        <begin position="1"/>
        <end position="300"/>
    </location>
</feature>
<feature type="domain" description="VOC 1" evidence="2">
    <location>
        <begin position="5"/>
        <end position="120"/>
    </location>
</feature>
<feature type="domain" description="VOC 2" evidence="2">
    <location>
        <begin position="142"/>
        <end position="270"/>
    </location>
</feature>
<feature type="binding site" evidence="1">
    <location>
        <position position="145"/>
    </location>
    <ligand>
        <name>Fe cation</name>
        <dbReference type="ChEBI" id="CHEBI:24875"/>
    </ligand>
</feature>
<feature type="binding site" evidence="1">
    <location>
        <position position="200"/>
    </location>
    <ligand>
        <name>substrate</name>
    </ligand>
</feature>
<feature type="binding site" evidence="1">
    <location>
        <position position="215"/>
    </location>
    <ligand>
        <name>Fe cation</name>
        <dbReference type="ChEBI" id="CHEBI:24875"/>
    </ligand>
</feature>
<feature type="binding site" evidence="1">
    <location>
        <position position="215"/>
    </location>
    <ligand>
        <name>substrate</name>
    </ligand>
</feature>
<feature type="binding site" evidence="1">
    <location>
        <position position="250"/>
    </location>
    <ligand>
        <name>substrate</name>
    </ligand>
</feature>
<feature type="binding site" evidence="1">
    <location>
        <position position="256"/>
    </location>
    <ligand>
        <name>substrate</name>
    </ligand>
</feature>
<feature type="binding site" evidence="1">
    <location>
        <position position="266"/>
    </location>
    <ligand>
        <name>Fe cation</name>
        <dbReference type="ChEBI" id="CHEBI:24875"/>
    </ligand>
</feature>
<gene>
    <name type="primary">hsaC</name>
    <name type="synonym">bphC</name>
    <name type="ordered locus">MT3673</name>
</gene>
<proteinExistence type="inferred from homology"/>
<dbReference type="EC" id="1.13.11.25"/>
<dbReference type="EMBL" id="AE000516">
    <property type="protein sequence ID" value="AAK48032.1"/>
    <property type="molecule type" value="Genomic_DNA"/>
</dbReference>
<dbReference type="PIR" id="F70605">
    <property type="entry name" value="F70605"/>
</dbReference>
<dbReference type="RefSeq" id="WP_003419378.1">
    <property type="nucleotide sequence ID" value="NZ_KK341227.1"/>
</dbReference>
<dbReference type="SMR" id="P9WNW6"/>
<dbReference type="KEGG" id="mtc:MT3673"/>
<dbReference type="PATRIC" id="fig|83331.31.peg.3955"/>
<dbReference type="HOGENOM" id="CLU_052361_2_0_11"/>
<dbReference type="UniPathway" id="UPA00296"/>
<dbReference type="Proteomes" id="UP000001020">
    <property type="component" value="Chromosome"/>
</dbReference>
<dbReference type="GO" id="GO:0047071">
    <property type="term" value="F:3,4-dihydroxy-9,10-secoandrosta-1,3,5(10)-triene-9,17-dione 4,5-dioxygenase activity"/>
    <property type="evidence" value="ECO:0007669"/>
    <property type="project" value="UniProtKB-EC"/>
</dbReference>
<dbReference type="GO" id="GO:0008198">
    <property type="term" value="F:ferrous iron binding"/>
    <property type="evidence" value="ECO:0007669"/>
    <property type="project" value="InterPro"/>
</dbReference>
<dbReference type="GO" id="GO:0008203">
    <property type="term" value="P:cholesterol metabolic process"/>
    <property type="evidence" value="ECO:0007669"/>
    <property type="project" value="UniProtKB-UniPathway"/>
</dbReference>
<dbReference type="GO" id="GO:0016042">
    <property type="term" value="P:lipid catabolic process"/>
    <property type="evidence" value="ECO:0007669"/>
    <property type="project" value="UniProtKB-KW"/>
</dbReference>
<dbReference type="CDD" id="cd07237">
    <property type="entry name" value="BphC1-RGP6_C_like"/>
    <property type="match status" value="1"/>
</dbReference>
<dbReference type="CDD" id="cd07252">
    <property type="entry name" value="BphC1-RGP6_N_like"/>
    <property type="match status" value="1"/>
</dbReference>
<dbReference type="FunFam" id="3.10.180.10:FF:000012">
    <property type="entry name" value="2,3-dihydroxybiphenyl 1,2-dioxygenase"/>
    <property type="match status" value="1"/>
</dbReference>
<dbReference type="FunFam" id="3.10.180.10:FF:000024">
    <property type="entry name" value="2,3-dihydroxybiphenyl 1,2-dioxygenase"/>
    <property type="match status" value="1"/>
</dbReference>
<dbReference type="Gene3D" id="3.10.180.10">
    <property type="entry name" value="2,3-Dihydroxybiphenyl 1,2-Dioxygenase, domain 1"/>
    <property type="match status" value="2"/>
</dbReference>
<dbReference type="InterPro" id="IPR029068">
    <property type="entry name" value="Glyas_Bleomycin-R_OHBP_Dase"/>
</dbReference>
<dbReference type="InterPro" id="IPR004360">
    <property type="entry name" value="Glyas_Fos-R_dOase_dom"/>
</dbReference>
<dbReference type="InterPro" id="IPR050383">
    <property type="entry name" value="GlyoxalaseI/FosfomycinResist"/>
</dbReference>
<dbReference type="InterPro" id="IPR054680">
    <property type="entry name" value="HsaC"/>
</dbReference>
<dbReference type="InterPro" id="IPR037523">
    <property type="entry name" value="VOC"/>
</dbReference>
<dbReference type="InterPro" id="IPR000486">
    <property type="entry name" value="Xdiol_ring_cleave_dOase_1/2"/>
</dbReference>
<dbReference type="NCBIfam" id="NF045631">
    <property type="entry name" value="exdiol_diox_HsaC"/>
    <property type="match status" value="1"/>
</dbReference>
<dbReference type="PANTHER" id="PTHR21366:SF14">
    <property type="entry name" value="GLYOXALASE DOMAIN-CONTAINING PROTEIN 5"/>
    <property type="match status" value="1"/>
</dbReference>
<dbReference type="PANTHER" id="PTHR21366">
    <property type="entry name" value="GLYOXALASE FAMILY PROTEIN"/>
    <property type="match status" value="1"/>
</dbReference>
<dbReference type="Pfam" id="PF22632">
    <property type="entry name" value="BphC_D1"/>
    <property type="match status" value="1"/>
</dbReference>
<dbReference type="Pfam" id="PF00903">
    <property type="entry name" value="Glyoxalase"/>
    <property type="match status" value="1"/>
</dbReference>
<dbReference type="SUPFAM" id="SSF54593">
    <property type="entry name" value="Glyoxalase/Bleomycin resistance protein/Dihydroxybiphenyl dioxygenase"/>
    <property type="match status" value="2"/>
</dbReference>
<dbReference type="PROSITE" id="PS00082">
    <property type="entry name" value="EXTRADIOL_DIOXYGENAS"/>
    <property type="match status" value="1"/>
</dbReference>
<dbReference type="PROSITE" id="PS51819">
    <property type="entry name" value="VOC"/>
    <property type="match status" value="2"/>
</dbReference>
<keyword id="KW-0058">Aromatic hydrocarbons catabolism</keyword>
<keyword id="KW-0153">Cholesterol metabolism</keyword>
<keyword id="KW-0223">Dioxygenase</keyword>
<keyword id="KW-0408">Iron</keyword>
<keyword id="KW-0442">Lipid degradation</keyword>
<keyword id="KW-0443">Lipid metabolism</keyword>
<keyword id="KW-0479">Metal-binding</keyword>
<keyword id="KW-0560">Oxidoreductase</keyword>
<keyword id="KW-1185">Reference proteome</keyword>
<keyword id="KW-0677">Repeat</keyword>
<keyword id="KW-0753">Steroid metabolism</keyword>
<keyword id="KW-1207">Sterol metabolism</keyword>
<accession>P9WNW6</accession>
<accession>L0TFW3</accession>
<accession>P96850</accession>
<accession>Q7D597</accession>
<comment type="function">
    <text evidence="1">Catalyzes the meta-cleavage of 3,4-dihydroxy-9,10-seconandrost-1,3,5(10)-triene-9,17-dione (3,4-DHSA) to produce 4,5-9,10-diseco-3-hydroxy-5,9,17-trioxoandrosta-1(10),2-diene-4-oic acid (4,9-DSHA).</text>
</comment>
<comment type="catalytic activity">
    <reaction>
        <text>3,4-dihydroxy-9,10-secoandrosta-1,3,5(10)-triene-9,17-dione + O2 = (1E,2Z)-3-hydroxy-5,9,17-trioxo-4,5:9,10-disecoandrosta-1(10),2-dien-4-oate + H(+)</text>
        <dbReference type="Rhea" id="RHEA:21352"/>
        <dbReference type="ChEBI" id="CHEBI:15378"/>
        <dbReference type="ChEBI" id="CHEBI:15379"/>
        <dbReference type="ChEBI" id="CHEBI:15896"/>
        <dbReference type="ChEBI" id="CHEBI:63690"/>
        <dbReference type="EC" id="1.13.11.25"/>
    </reaction>
</comment>
<comment type="cofactor">
    <cofactor evidence="1">
        <name>Fe(2+)</name>
        <dbReference type="ChEBI" id="CHEBI:29033"/>
    </cofactor>
    <text evidence="1">Binds 1 Fe(2+) ion per subunit.</text>
</comment>
<comment type="pathway">
    <text>Steroid metabolism; cholesterol metabolism.</text>
</comment>
<comment type="subunit">
    <text evidence="1">Homodimer, but may form a homooctamer.</text>
</comment>
<comment type="similarity">
    <text evidence="3">Belongs to the extradiol ring-cleavage dioxygenase family.</text>
</comment>
<evidence type="ECO:0000250" key="1"/>
<evidence type="ECO:0000255" key="2">
    <source>
        <dbReference type="PROSITE-ProRule" id="PRU01163"/>
    </source>
</evidence>
<evidence type="ECO:0000305" key="3"/>
<protein>
    <recommendedName>
        <fullName>Iron-dependent extradiol dioxygenase</fullName>
        <ecNumber>1.13.11.25</ecNumber>
    </recommendedName>
</protein>